<reference key="1">
    <citation type="journal article" date="2000" name="Fungal Genet. Biol.">
        <title>Analysis of two Aspergillus nidulans genes encoding extracellular proteases.</title>
        <authorList>
            <person name="vanKuyk P.A."/>
            <person name="Cheetham B.F."/>
            <person name="Katz M.E."/>
        </authorList>
    </citation>
    <scope>NUCLEOTIDE SEQUENCE [GENOMIC DNA]</scope>
    <scope>INDUCTION</scope>
    <source>
        <strain>MH2</strain>
    </source>
</reference>
<reference key="2">
    <citation type="journal article" date="2005" name="Nature">
        <title>Sequencing of Aspergillus nidulans and comparative analysis with A. fumigatus and A. oryzae.</title>
        <authorList>
            <person name="Galagan J.E."/>
            <person name="Calvo S.E."/>
            <person name="Cuomo C."/>
            <person name="Ma L.-J."/>
            <person name="Wortman J.R."/>
            <person name="Batzoglou S."/>
            <person name="Lee S.-I."/>
            <person name="Bastuerkmen M."/>
            <person name="Spevak C.C."/>
            <person name="Clutterbuck J."/>
            <person name="Kapitonov V."/>
            <person name="Jurka J."/>
            <person name="Scazzocchio C."/>
            <person name="Farman M.L."/>
            <person name="Butler J."/>
            <person name="Purcell S."/>
            <person name="Harris S."/>
            <person name="Braus G.H."/>
            <person name="Draht O."/>
            <person name="Busch S."/>
            <person name="D'Enfert C."/>
            <person name="Bouchier C."/>
            <person name="Goldman G.H."/>
            <person name="Bell-Pedersen D."/>
            <person name="Griffiths-Jones S."/>
            <person name="Doonan J.H."/>
            <person name="Yu J."/>
            <person name="Vienken K."/>
            <person name="Pain A."/>
            <person name="Freitag M."/>
            <person name="Selker E.U."/>
            <person name="Archer D.B."/>
            <person name="Penalva M.A."/>
            <person name="Oakley B.R."/>
            <person name="Momany M."/>
            <person name="Tanaka T."/>
            <person name="Kumagai T."/>
            <person name="Asai K."/>
            <person name="Machida M."/>
            <person name="Nierman W.C."/>
            <person name="Denning D.W."/>
            <person name="Caddick M.X."/>
            <person name="Hynes M."/>
            <person name="Paoletti M."/>
            <person name="Fischer R."/>
            <person name="Miller B.L."/>
            <person name="Dyer P.S."/>
            <person name="Sachs M.S."/>
            <person name="Osmani S.A."/>
            <person name="Birren B.W."/>
        </authorList>
    </citation>
    <scope>NUCLEOTIDE SEQUENCE [LARGE SCALE GENOMIC DNA]</scope>
    <source>
        <strain>FGSC A4 / ATCC 38163 / CBS 112.46 / NRRL 194 / M139</strain>
    </source>
</reference>
<reference key="3">
    <citation type="journal article" date="2009" name="Fungal Genet. Biol.">
        <title>The 2008 update of the Aspergillus nidulans genome annotation: a community effort.</title>
        <authorList>
            <person name="Wortman J.R."/>
            <person name="Gilsenan J.M."/>
            <person name="Joardar V."/>
            <person name="Deegan J."/>
            <person name="Clutterbuck J."/>
            <person name="Andersen M.R."/>
            <person name="Archer D."/>
            <person name="Bencina M."/>
            <person name="Braus G."/>
            <person name="Coutinho P."/>
            <person name="von Dohren H."/>
            <person name="Doonan J."/>
            <person name="Driessen A.J."/>
            <person name="Durek P."/>
            <person name="Espeso E."/>
            <person name="Fekete E."/>
            <person name="Flipphi M."/>
            <person name="Estrada C.G."/>
            <person name="Geysens S."/>
            <person name="Goldman G."/>
            <person name="de Groot P.W."/>
            <person name="Hansen K."/>
            <person name="Harris S.D."/>
            <person name="Heinekamp T."/>
            <person name="Helmstaedt K."/>
            <person name="Henrissat B."/>
            <person name="Hofmann G."/>
            <person name="Homan T."/>
            <person name="Horio T."/>
            <person name="Horiuchi H."/>
            <person name="James S."/>
            <person name="Jones M."/>
            <person name="Karaffa L."/>
            <person name="Karanyi Z."/>
            <person name="Kato M."/>
            <person name="Keller N."/>
            <person name="Kelly D.E."/>
            <person name="Kiel J.A."/>
            <person name="Kim J.M."/>
            <person name="van der Klei I.J."/>
            <person name="Klis F.M."/>
            <person name="Kovalchuk A."/>
            <person name="Krasevec N."/>
            <person name="Kubicek C.P."/>
            <person name="Liu B."/>
            <person name="Maccabe A."/>
            <person name="Meyer V."/>
            <person name="Mirabito P."/>
            <person name="Miskei M."/>
            <person name="Mos M."/>
            <person name="Mullins J."/>
            <person name="Nelson D.R."/>
            <person name="Nielsen J."/>
            <person name="Oakley B.R."/>
            <person name="Osmani S.A."/>
            <person name="Pakula T."/>
            <person name="Paszewski A."/>
            <person name="Paulsen I."/>
            <person name="Pilsyk S."/>
            <person name="Pocsi I."/>
            <person name="Punt P.J."/>
            <person name="Ram A.F."/>
            <person name="Ren Q."/>
            <person name="Robellet X."/>
            <person name="Robson G."/>
            <person name="Seiboth B."/>
            <person name="van Solingen P."/>
            <person name="Specht T."/>
            <person name="Sun J."/>
            <person name="Taheri-Talesh N."/>
            <person name="Takeshita N."/>
            <person name="Ussery D."/>
            <person name="vanKuyk P.A."/>
            <person name="Visser H."/>
            <person name="van de Vondervoort P.J."/>
            <person name="de Vries R.P."/>
            <person name="Walton J."/>
            <person name="Xiang X."/>
            <person name="Xiong Y."/>
            <person name="Zeng A.P."/>
            <person name="Brandt B.W."/>
            <person name="Cornell M.J."/>
            <person name="van den Hondel C.A."/>
            <person name="Visser J."/>
            <person name="Oliver S.G."/>
            <person name="Turner G."/>
        </authorList>
    </citation>
    <scope>GENOME REANNOTATION</scope>
    <source>
        <strain>FGSC A4 / ATCC 38163 / CBS 112.46 / NRRL 194 / M139</strain>
    </source>
</reference>
<protein>
    <recommendedName>
        <fullName evidence="7">Aspergillopepsin-1</fullName>
        <ecNumber evidence="1">3.4.23.18</ecNumber>
    </recommendedName>
    <alternativeName>
        <fullName>Aspartic protease pepA</fullName>
    </alternativeName>
    <alternativeName>
        <fullName>Aspergillopepsin I</fullName>
    </alternativeName>
    <alternativeName>
        <fullName>Aspergillopeptidase A</fullName>
    </alternativeName>
    <alternativeName>
        <fullName>Proctase B</fullName>
    </alternativeName>
</protein>
<dbReference type="EC" id="3.4.23.18" evidence="1"/>
<dbReference type="EMBL" id="AF090736">
    <property type="protein sequence ID" value="AAD04378.1"/>
    <property type="molecule type" value="Genomic_DNA"/>
</dbReference>
<dbReference type="EMBL" id="AACD01000113">
    <property type="protein sequence ID" value="EAA58287.1"/>
    <property type="molecule type" value="Genomic_DNA"/>
</dbReference>
<dbReference type="EMBL" id="BN001301">
    <property type="protein sequence ID" value="CBF71666.1"/>
    <property type="molecule type" value="Genomic_DNA"/>
</dbReference>
<dbReference type="RefSeq" id="XP_664492.1">
    <property type="nucleotide sequence ID" value="XM_659400.1"/>
</dbReference>
<dbReference type="SMR" id="O93885"/>
<dbReference type="STRING" id="227321.O93885"/>
<dbReference type="MEROPS" id="A01.026"/>
<dbReference type="GlyCosmos" id="O93885">
    <property type="glycosylation" value="1 site, No reported glycans"/>
</dbReference>
<dbReference type="EnsemblFungi" id="CBF71666">
    <property type="protein sequence ID" value="CBF71666"/>
    <property type="gene ID" value="ANIA_06888"/>
</dbReference>
<dbReference type="KEGG" id="ani:ANIA_06888"/>
<dbReference type="VEuPathDB" id="FungiDB:AN6888"/>
<dbReference type="eggNOG" id="KOG1339">
    <property type="taxonomic scope" value="Eukaryota"/>
</dbReference>
<dbReference type="HOGENOM" id="CLU_013253_0_1_1"/>
<dbReference type="InParanoid" id="O93885"/>
<dbReference type="OMA" id="DEEYIGN"/>
<dbReference type="OrthoDB" id="2747330at2759"/>
<dbReference type="Proteomes" id="UP000000560">
    <property type="component" value="Chromosome I"/>
</dbReference>
<dbReference type="GO" id="GO:0005576">
    <property type="term" value="C:extracellular region"/>
    <property type="evidence" value="ECO:0007669"/>
    <property type="project" value="UniProtKB-SubCell"/>
</dbReference>
<dbReference type="GO" id="GO:0004190">
    <property type="term" value="F:aspartic-type endopeptidase activity"/>
    <property type="evidence" value="ECO:0000318"/>
    <property type="project" value="GO_Central"/>
</dbReference>
<dbReference type="GO" id="GO:0006508">
    <property type="term" value="P:proteolysis"/>
    <property type="evidence" value="ECO:0000318"/>
    <property type="project" value="GO_Central"/>
</dbReference>
<dbReference type="CDD" id="cd06097">
    <property type="entry name" value="Aspergillopepsin_like"/>
    <property type="match status" value="1"/>
</dbReference>
<dbReference type="FunFam" id="2.40.70.10:FF:000024">
    <property type="entry name" value="Endothiapepsin"/>
    <property type="match status" value="1"/>
</dbReference>
<dbReference type="FunFam" id="2.40.70.10:FF:000026">
    <property type="entry name" value="Endothiapepsin"/>
    <property type="match status" value="1"/>
</dbReference>
<dbReference type="Gene3D" id="2.40.70.10">
    <property type="entry name" value="Acid Proteases"/>
    <property type="match status" value="2"/>
</dbReference>
<dbReference type="InterPro" id="IPR001461">
    <property type="entry name" value="Aspartic_peptidase_A1"/>
</dbReference>
<dbReference type="InterPro" id="IPR001969">
    <property type="entry name" value="Aspartic_peptidase_AS"/>
</dbReference>
<dbReference type="InterPro" id="IPR034163">
    <property type="entry name" value="Aspergillopepsin-like_cat_dom"/>
</dbReference>
<dbReference type="InterPro" id="IPR033121">
    <property type="entry name" value="PEPTIDASE_A1"/>
</dbReference>
<dbReference type="InterPro" id="IPR021109">
    <property type="entry name" value="Peptidase_aspartic_dom_sf"/>
</dbReference>
<dbReference type="PANTHER" id="PTHR47966:SF2">
    <property type="entry name" value="ASPERGILLOPEPSIN-1-RELATED"/>
    <property type="match status" value="1"/>
</dbReference>
<dbReference type="PANTHER" id="PTHR47966">
    <property type="entry name" value="BETA-SITE APP-CLEAVING ENZYME, ISOFORM A-RELATED"/>
    <property type="match status" value="1"/>
</dbReference>
<dbReference type="Pfam" id="PF00026">
    <property type="entry name" value="Asp"/>
    <property type="match status" value="1"/>
</dbReference>
<dbReference type="PRINTS" id="PR00792">
    <property type="entry name" value="PEPSIN"/>
</dbReference>
<dbReference type="SUPFAM" id="SSF50630">
    <property type="entry name" value="Acid proteases"/>
    <property type="match status" value="1"/>
</dbReference>
<dbReference type="PROSITE" id="PS00141">
    <property type="entry name" value="ASP_PROTEASE"/>
    <property type="match status" value="2"/>
</dbReference>
<dbReference type="PROSITE" id="PS51767">
    <property type="entry name" value="PEPTIDASE_A1"/>
    <property type="match status" value="1"/>
</dbReference>
<organism>
    <name type="scientific">Emericella nidulans (strain FGSC A4 / ATCC 38163 / CBS 112.46 / NRRL 194 / M139)</name>
    <name type="common">Aspergillus nidulans</name>
    <dbReference type="NCBI Taxonomy" id="227321"/>
    <lineage>
        <taxon>Eukaryota</taxon>
        <taxon>Fungi</taxon>
        <taxon>Dikarya</taxon>
        <taxon>Ascomycota</taxon>
        <taxon>Pezizomycotina</taxon>
        <taxon>Eurotiomycetes</taxon>
        <taxon>Eurotiomycetidae</taxon>
        <taxon>Eurotiales</taxon>
        <taxon>Aspergillaceae</taxon>
        <taxon>Aspergillus</taxon>
        <taxon>Aspergillus subgen. Nidulantes</taxon>
    </lineage>
</organism>
<proteinExistence type="evidence at transcript level"/>
<evidence type="ECO:0000250" key="1">
    <source>
        <dbReference type="UniProtKB" id="Q12567"/>
    </source>
</evidence>
<evidence type="ECO:0000255" key="2"/>
<evidence type="ECO:0000255" key="3">
    <source>
        <dbReference type="PROSITE-ProRule" id="PRU00498"/>
    </source>
</evidence>
<evidence type="ECO:0000255" key="4">
    <source>
        <dbReference type="PROSITE-ProRule" id="PRU01103"/>
    </source>
</evidence>
<evidence type="ECO:0000269" key="5">
    <source>
    </source>
</evidence>
<evidence type="ECO:0000303" key="6">
    <source>
    </source>
</evidence>
<evidence type="ECO:0000305" key="7"/>
<comment type="function">
    <text evidence="1">Secreted aspartic endopeptidase that allows assimilation of proteinaceous substrates. The scissile peptide bond is attacked by a nucleophilic water molecule activated by two aspartic residues in the active site. Shows a broad primary substrate specificity. Favors hydrophobic residues at the P1 and P1' positions, but also accepts a lysine residue in the P1 position, leading to the activation of trypsinogen and chymotrypsinogen A.</text>
</comment>
<comment type="catalytic activity">
    <reaction evidence="1">
        <text>Hydrolysis of proteins with broad specificity. Generally favors hydrophobic residues in P1 and P1', but also accepts Lys in P1, which leads to activation of trypsinogen. Does not clot milk.</text>
        <dbReference type="EC" id="3.4.23.18"/>
    </reaction>
</comment>
<comment type="subunit">
    <text evidence="1">Monomer.</text>
</comment>
<comment type="subcellular location">
    <subcellularLocation>
        <location evidence="1">Secreted</location>
    </subcellularLocation>
</comment>
<comment type="induction">
    <text evidence="5">Expressed, albeit at a very low level.</text>
</comment>
<comment type="similarity">
    <text evidence="4">Belongs to the peptidase A1 family.</text>
</comment>
<name>PEPA_EMENI</name>
<gene>
    <name evidence="6" type="primary">prtB</name>
    <name type="synonym">pepA</name>
    <name type="ORF">AN6888</name>
</gene>
<sequence>MVVFSKVAAAAFGLSAVASAMPAAPPRQGFTINQLTRAIPKRTINLPAIYANALSKYGGNVPPHIQDAMAHGSAVTTPEQYDVEYLTPVAVGGTTMNLDFDTGSADLWVFSNELPSSQTTGHSVYKPSDNGTRMSGYSWEISYGDGSSAGGDVYRDTVTVGGVTAPGQAVEAASHISEQFTRDQNNDGLLGLAFSSINTVQPKSQTTFFDSVKSQLESPLFAVTLKHQAPGSYDFGYIDQSKYTGELTYTDVDNSQGFWMFSATAGETDFDAIADTGTTLIMIDQSIAEDYYSQVPLAFNNFFYGGWTFPCSAELPSFTVTINGYDAVVPGEHIKYAPVTDGSSTCFGGIQDNQGLPFSILGDVFLKSQYVVFDSEGPQLGFAPQA</sequence>
<accession>O93885</accession>
<accession>C8V2W4</accession>
<accession>Q5AXU2</accession>
<feature type="signal peptide" evidence="2">
    <location>
        <begin position="1"/>
        <end position="20"/>
    </location>
</feature>
<feature type="propeptide" id="PRO_0000407048" description="Activation peptide" evidence="1">
    <location>
        <begin position="21"/>
        <end position="69"/>
    </location>
</feature>
<feature type="chain" id="PRO_0000407049" description="Aspergillopepsin-1">
    <location>
        <begin position="70"/>
        <end position="386"/>
    </location>
</feature>
<feature type="domain" description="Peptidase A1" evidence="4">
    <location>
        <begin position="85"/>
        <end position="383"/>
    </location>
</feature>
<feature type="active site" evidence="4">
    <location>
        <position position="101"/>
    </location>
</feature>
<feature type="active site" evidence="4">
    <location>
        <position position="275"/>
    </location>
</feature>
<feature type="glycosylation site" description="N-linked (GlcNAc...) asparagine" evidence="3">
    <location>
        <position position="130"/>
    </location>
</feature>
<feature type="disulfide bond" evidence="4">
    <location>
        <begin position="311"/>
        <end position="346"/>
    </location>
</feature>
<keyword id="KW-0064">Aspartyl protease</keyword>
<keyword id="KW-1015">Disulfide bond</keyword>
<keyword id="KW-0325">Glycoprotein</keyword>
<keyword id="KW-0378">Hydrolase</keyword>
<keyword id="KW-0645">Protease</keyword>
<keyword id="KW-1185">Reference proteome</keyword>
<keyword id="KW-0964">Secreted</keyword>
<keyword id="KW-0732">Signal</keyword>
<keyword id="KW-0865">Zymogen</keyword>